<comment type="function">
    <text>PPIases accelerate the folding of proteins. It catalyzes the cis-trans isomerization of proline imidic peptide bonds in oligopeptides. Binds double-stranded DNA in vitro.</text>
</comment>
<comment type="catalytic activity">
    <reaction>
        <text>[protein]-peptidylproline (omega=180) = [protein]-peptidylproline (omega=0)</text>
        <dbReference type="Rhea" id="RHEA:16237"/>
        <dbReference type="Rhea" id="RHEA-COMP:10747"/>
        <dbReference type="Rhea" id="RHEA-COMP:10748"/>
        <dbReference type="ChEBI" id="CHEBI:83833"/>
        <dbReference type="ChEBI" id="CHEBI:83834"/>
        <dbReference type="EC" id="5.2.1.8"/>
    </reaction>
</comment>
<comment type="activity regulation">
    <text>Inhibited by both FK506 and rapamycin.</text>
</comment>
<comment type="subcellular location">
    <subcellularLocation>
        <location>Nucleus</location>
    </subcellularLocation>
</comment>
<comment type="PTM">
    <text>Phosphorylated by a nuclear kinase in the presence of Mg(2+) and ATP.</text>
</comment>
<comment type="similarity">
    <text evidence="3">Belongs to the FKBP-type PPIase family.</text>
</comment>
<proteinExistence type="evidence at transcript level"/>
<feature type="chain" id="PRO_0000075311" description="46 kDa FK506-binding nuclear protein">
    <location>
        <begin position="1"/>
        <end position="412"/>
    </location>
</feature>
<feature type="domain" description="PPIase FKBP-type" evidence="1">
    <location>
        <begin position="324"/>
        <end position="412"/>
    </location>
</feature>
<feature type="region of interest" description="Disordered" evidence="2">
    <location>
        <begin position="95"/>
        <end position="304"/>
    </location>
</feature>
<feature type="compositionally biased region" description="Acidic residues" evidence="2">
    <location>
        <begin position="95"/>
        <end position="113"/>
    </location>
</feature>
<feature type="compositionally biased region" description="Acidic residues" evidence="2">
    <location>
        <begin position="169"/>
        <end position="178"/>
    </location>
</feature>
<feature type="compositionally biased region" description="Acidic residues" evidence="2">
    <location>
        <begin position="188"/>
        <end position="216"/>
    </location>
</feature>
<feature type="compositionally biased region" description="Basic residues" evidence="2">
    <location>
        <begin position="247"/>
        <end position="257"/>
    </location>
</feature>
<feature type="compositionally biased region" description="Basic and acidic residues" evidence="2">
    <location>
        <begin position="271"/>
        <end position="303"/>
    </location>
</feature>
<sequence length="412" mass="45810">MFWGLIMEPNKRYTQVVEKPFHISQAAMDISTGDNDPCQVMVVVDGKNFLVCTLQKGKIIQVPLDLYFKSGDSVSFLTNGKCNVHLTGYLDPEFEEDLEDEEEAEEEEEEEEAPPLVPAKNKRKLENANDATANKKAKPDKKAGKNSAPAAESDSDDDDEDQLQKFLDGEDIDTDENDESFKMNTSAEGDDSDEEDDDEDEEDEEDDDEDDEEEEEAPKKKKKQPAAEQDSTLDTSKESVDMSKLSKSQKRRLKKKLQQQAKQQPQVNGVDKPKKEEPQQKAEKKKPEAKKEEAPVEKKEKKQIAGGVSIEDLKVGSGPVAKAGKVVMVYYEGRLKQNNKMFDNCVKGPGFKFRLGSKEVISGWDVGIAGMKVGGKRKIVCPPAMAYGAKGSPPVIPPNSTLVFEVDLKNVK</sequence>
<organism>
    <name type="scientific">Spodoptera frugiperda</name>
    <name type="common">Fall armyworm</name>
    <dbReference type="NCBI Taxonomy" id="7108"/>
    <lineage>
        <taxon>Eukaryota</taxon>
        <taxon>Metazoa</taxon>
        <taxon>Ecdysozoa</taxon>
        <taxon>Arthropoda</taxon>
        <taxon>Hexapoda</taxon>
        <taxon>Insecta</taxon>
        <taxon>Pterygota</taxon>
        <taxon>Neoptera</taxon>
        <taxon>Endopterygota</taxon>
        <taxon>Lepidoptera</taxon>
        <taxon>Glossata</taxon>
        <taxon>Ditrysia</taxon>
        <taxon>Noctuoidea</taxon>
        <taxon>Noctuidae</taxon>
        <taxon>Amphipyrinae</taxon>
        <taxon>Spodoptera</taxon>
    </lineage>
</organism>
<evidence type="ECO:0000255" key="1">
    <source>
        <dbReference type="PROSITE-ProRule" id="PRU00277"/>
    </source>
</evidence>
<evidence type="ECO:0000256" key="2">
    <source>
        <dbReference type="SAM" id="MobiDB-lite"/>
    </source>
</evidence>
<evidence type="ECO:0000305" key="3"/>
<gene>
    <name type="primary">FKBP46</name>
</gene>
<keyword id="KW-0238">DNA-binding</keyword>
<keyword id="KW-0413">Isomerase</keyword>
<keyword id="KW-0539">Nucleus</keyword>
<keyword id="KW-0597">Phosphoprotein</keyword>
<keyword id="KW-0697">Rotamase</keyword>
<name>FKBP4_SPOFR</name>
<accession>Q26486</accession>
<dbReference type="EC" id="5.2.1.8"/>
<dbReference type="EMBL" id="U15038">
    <property type="protein sequence ID" value="AAA58962.1"/>
    <property type="molecule type" value="mRNA"/>
</dbReference>
<dbReference type="PIR" id="A55320">
    <property type="entry name" value="A55320"/>
</dbReference>
<dbReference type="SMR" id="Q26486"/>
<dbReference type="Proteomes" id="UP000829999">
    <property type="component" value="Unplaced"/>
</dbReference>
<dbReference type="GO" id="GO:0000785">
    <property type="term" value="C:chromatin"/>
    <property type="evidence" value="ECO:0007669"/>
    <property type="project" value="TreeGrafter"/>
</dbReference>
<dbReference type="GO" id="GO:0005730">
    <property type="term" value="C:nucleolus"/>
    <property type="evidence" value="ECO:0007669"/>
    <property type="project" value="TreeGrafter"/>
</dbReference>
<dbReference type="GO" id="GO:0003677">
    <property type="term" value="F:DNA binding"/>
    <property type="evidence" value="ECO:0007669"/>
    <property type="project" value="UniProtKB-KW"/>
</dbReference>
<dbReference type="GO" id="GO:0003755">
    <property type="term" value="F:peptidyl-prolyl cis-trans isomerase activity"/>
    <property type="evidence" value="ECO:0007669"/>
    <property type="project" value="UniProtKB-KW"/>
</dbReference>
<dbReference type="FunFam" id="3.10.50.40:FF:000006">
    <property type="entry name" value="Peptidyl-prolyl cis-trans isomerase"/>
    <property type="match status" value="1"/>
</dbReference>
<dbReference type="Gene3D" id="3.10.50.40">
    <property type="match status" value="1"/>
</dbReference>
<dbReference type="Gene3D" id="2.60.120.340">
    <property type="entry name" value="Nucleoplasmin core domain"/>
    <property type="match status" value="1"/>
</dbReference>
<dbReference type="InterPro" id="IPR041232">
    <property type="entry name" value="NPL"/>
</dbReference>
<dbReference type="InterPro" id="IPR046357">
    <property type="entry name" value="PPIase_dom_sf"/>
</dbReference>
<dbReference type="InterPro" id="IPR001179">
    <property type="entry name" value="PPIase_FKBP_dom"/>
</dbReference>
<dbReference type="InterPro" id="IPR023566">
    <property type="entry name" value="PPIase_Fpr3/Fpr4-like"/>
</dbReference>
<dbReference type="PANTHER" id="PTHR43811:SF19">
    <property type="entry name" value="39 KDA FK506-BINDING NUCLEAR PROTEIN"/>
    <property type="match status" value="1"/>
</dbReference>
<dbReference type="PANTHER" id="PTHR43811">
    <property type="entry name" value="FKBP-TYPE PEPTIDYL-PROLYL CIS-TRANS ISOMERASE FKPA"/>
    <property type="match status" value="1"/>
</dbReference>
<dbReference type="Pfam" id="PF00254">
    <property type="entry name" value="FKBP_C"/>
    <property type="match status" value="1"/>
</dbReference>
<dbReference type="Pfam" id="PF17800">
    <property type="entry name" value="NPL"/>
    <property type="match status" value="1"/>
</dbReference>
<dbReference type="PIRSF" id="PIRSF001473">
    <property type="entry name" value="FK506-bp_FPR3"/>
    <property type="match status" value="1"/>
</dbReference>
<dbReference type="SUPFAM" id="SSF54534">
    <property type="entry name" value="FKBP-like"/>
    <property type="match status" value="1"/>
</dbReference>
<dbReference type="PROSITE" id="PS50059">
    <property type="entry name" value="FKBP_PPIASE"/>
    <property type="match status" value="1"/>
</dbReference>
<reference key="1">
    <citation type="journal article" date="1994" name="J. Biol. Chem.">
        <title>FKBP46, a novel Sf9 insect cell nuclear immunophilin that forms a protein-kinase complex.</title>
        <authorList>
            <person name="Alnemri E.S."/>
            <person name="Fernandes-Alnemri T."/>
            <person name="Pomerenke K."/>
            <person name="Robertson N.M."/>
            <person name="Dudley K."/>
            <person name="Dubois G.C."/>
            <person name="Litwack G."/>
        </authorList>
    </citation>
    <scope>NUCLEOTIDE SEQUENCE [MRNA]</scope>
</reference>
<protein>
    <recommendedName>
        <fullName>46 kDa FK506-binding nuclear protein</fullName>
        <ecNumber>5.2.1.8</ecNumber>
    </recommendedName>
    <alternativeName>
        <fullName>Peptidyl-prolyl cis-trans isomerase</fullName>
        <shortName>PPIase</shortName>
    </alternativeName>
    <alternativeName>
        <fullName>Rotamase</fullName>
    </alternativeName>
</protein>